<dbReference type="EC" id="3.1.26.3" evidence="1"/>
<dbReference type="EMBL" id="BX294141">
    <property type="protein sequence ID" value="CAD78182.1"/>
    <property type="status" value="ALT_INIT"/>
    <property type="molecule type" value="Genomic_DNA"/>
</dbReference>
<dbReference type="RefSeq" id="NP_866401.1">
    <property type="nucleotide sequence ID" value="NC_005027.1"/>
</dbReference>
<dbReference type="RefSeq" id="WP_011120177.1">
    <property type="nucleotide sequence ID" value="NC_005027.1"/>
</dbReference>
<dbReference type="SMR" id="Q7UGZ7"/>
<dbReference type="FunCoup" id="Q7UGZ7">
    <property type="interactions" value="417"/>
</dbReference>
<dbReference type="STRING" id="243090.RB4925"/>
<dbReference type="EnsemblBacteria" id="CAD78182">
    <property type="protein sequence ID" value="CAD78182"/>
    <property type="gene ID" value="RB4925"/>
</dbReference>
<dbReference type="KEGG" id="rba:RB4925"/>
<dbReference type="PATRIC" id="fig|243090.15.peg.2347"/>
<dbReference type="eggNOG" id="COG0571">
    <property type="taxonomic scope" value="Bacteria"/>
</dbReference>
<dbReference type="HOGENOM" id="CLU_000907_1_3_0"/>
<dbReference type="InParanoid" id="Q7UGZ7"/>
<dbReference type="OrthoDB" id="9805026at2"/>
<dbReference type="Proteomes" id="UP000001025">
    <property type="component" value="Chromosome"/>
</dbReference>
<dbReference type="GO" id="GO:0005829">
    <property type="term" value="C:cytosol"/>
    <property type="evidence" value="ECO:0000318"/>
    <property type="project" value="GO_Central"/>
</dbReference>
<dbReference type="GO" id="GO:0003725">
    <property type="term" value="F:double-stranded RNA binding"/>
    <property type="evidence" value="ECO:0000318"/>
    <property type="project" value="GO_Central"/>
</dbReference>
<dbReference type="GO" id="GO:0046872">
    <property type="term" value="F:metal ion binding"/>
    <property type="evidence" value="ECO:0007669"/>
    <property type="project" value="UniProtKB-KW"/>
</dbReference>
<dbReference type="GO" id="GO:0004525">
    <property type="term" value="F:ribonuclease III activity"/>
    <property type="evidence" value="ECO:0000318"/>
    <property type="project" value="GO_Central"/>
</dbReference>
<dbReference type="GO" id="GO:0019843">
    <property type="term" value="F:rRNA binding"/>
    <property type="evidence" value="ECO:0007669"/>
    <property type="project" value="UniProtKB-KW"/>
</dbReference>
<dbReference type="GO" id="GO:0006397">
    <property type="term" value="P:mRNA processing"/>
    <property type="evidence" value="ECO:0007669"/>
    <property type="project" value="UniProtKB-UniRule"/>
</dbReference>
<dbReference type="GO" id="GO:0010468">
    <property type="term" value="P:regulation of gene expression"/>
    <property type="evidence" value="ECO:0000318"/>
    <property type="project" value="GO_Central"/>
</dbReference>
<dbReference type="GO" id="GO:0006396">
    <property type="term" value="P:RNA processing"/>
    <property type="evidence" value="ECO:0000318"/>
    <property type="project" value="GO_Central"/>
</dbReference>
<dbReference type="GO" id="GO:0006364">
    <property type="term" value="P:rRNA processing"/>
    <property type="evidence" value="ECO:0007669"/>
    <property type="project" value="UniProtKB-UniRule"/>
</dbReference>
<dbReference type="GO" id="GO:0008033">
    <property type="term" value="P:tRNA processing"/>
    <property type="evidence" value="ECO:0007669"/>
    <property type="project" value="UniProtKB-KW"/>
</dbReference>
<dbReference type="CDD" id="cd10845">
    <property type="entry name" value="DSRM_RNAse_III_family"/>
    <property type="match status" value="1"/>
</dbReference>
<dbReference type="CDD" id="cd00593">
    <property type="entry name" value="RIBOc"/>
    <property type="match status" value="1"/>
</dbReference>
<dbReference type="FunFam" id="1.10.1520.10:FF:000001">
    <property type="entry name" value="Ribonuclease 3"/>
    <property type="match status" value="1"/>
</dbReference>
<dbReference type="FunFam" id="3.30.160.20:FF:000159">
    <property type="entry name" value="Ribonuclease 3"/>
    <property type="match status" value="1"/>
</dbReference>
<dbReference type="Gene3D" id="3.30.160.20">
    <property type="match status" value="1"/>
</dbReference>
<dbReference type="Gene3D" id="1.10.1520.10">
    <property type="entry name" value="Ribonuclease III domain"/>
    <property type="match status" value="1"/>
</dbReference>
<dbReference type="HAMAP" id="MF_00104">
    <property type="entry name" value="RNase_III"/>
    <property type="match status" value="1"/>
</dbReference>
<dbReference type="InterPro" id="IPR014720">
    <property type="entry name" value="dsRBD_dom"/>
</dbReference>
<dbReference type="InterPro" id="IPR011907">
    <property type="entry name" value="RNase_III"/>
</dbReference>
<dbReference type="InterPro" id="IPR000999">
    <property type="entry name" value="RNase_III_dom"/>
</dbReference>
<dbReference type="InterPro" id="IPR036389">
    <property type="entry name" value="RNase_III_sf"/>
</dbReference>
<dbReference type="NCBIfam" id="TIGR02191">
    <property type="entry name" value="RNaseIII"/>
    <property type="match status" value="1"/>
</dbReference>
<dbReference type="PANTHER" id="PTHR11207:SF0">
    <property type="entry name" value="RIBONUCLEASE 3"/>
    <property type="match status" value="1"/>
</dbReference>
<dbReference type="PANTHER" id="PTHR11207">
    <property type="entry name" value="RIBONUCLEASE III"/>
    <property type="match status" value="1"/>
</dbReference>
<dbReference type="Pfam" id="PF00035">
    <property type="entry name" value="dsrm"/>
    <property type="match status" value="1"/>
</dbReference>
<dbReference type="Pfam" id="PF14622">
    <property type="entry name" value="Ribonucleas_3_3"/>
    <property type="match status" value="1"/>
</dbReference>
<dbReference type="SMART" id="SM00358">
    <property type="entry name" value="DSRM"/>
    <property type="match status" value="1"/>
</dbReference>
<dbReference type="SMART" id="SM00535">
    <property type="entry name" value="RIBOc"/>
    <property type="match status" value="1"/>
</dbReference>
<dbReference type="SUPFAM" id="SSF54768">
    <property type="entry name" value="dsRNA-binding domain-like"/>
    <property type="match status" value="1"/>
</dbReference>
<dbReference type="SUPFAM" id="SSF69065">
    <property type="entry name" value="RNase III domain-like"/>
    <property type="match status" value="1"/>
</dbReference>
<dbReference type="PROSITE" id="PS50137">
    <property type="entry name" value="DS_RBD"/>
    <property type="match status" value="1"/>
</dbReference>
<dbReference type="PROSITE" id="PS00517">
    <property type="entry name" value="RNASE_3_1"/>
    <property type="match status" value="1"/>
</dbReference>
<dbReference type="PROSITE" id="PS50142">
    <property type="entry name" value="RNASE_3_2"/>
    <property type="match status" value="1"/>
</dbReference>
<keyword id="KW-0963">Cytoplasm</keyword>
<keyword id="KW-0255">Endonuclease</keyword>
<keyword id="KW-0378">Hydrolase</keyword>
<keyword id="KW-0460">Magnesium</keyword>
<keyword id="KW-0479">Metal-binding</keyword>
<keyword id="KW-0507">mRNA processing</keyword>
<keyword id="KW-0540">Nuclease</keyword>
<keyword id="KW-1185">Reference proteome</keyword>
<keyword id="KW-0694">RNA-binding</keyword>
<keyword id="KW-0698">rRNA processing</keyword>
<keyword id="KW-0699">rRNA-binding</keyword>
<keyword id="KW-0819">tRNA processing</keyword>
<feature type="chain" id="PRO_0000180424" description="Ribonuclease 3">
    <location>
        <begin position="1"/>
        <end position="266"/>
    </location>
</feature>
<feature type="domain" description="RNase III" evidence="1">
    <location>
        <begin position="34"/>
        <end position="158"/>
    </location>
</feature>
<feature type="domain" description="DRBM" evidence="1">
    <location>
        <begin position="185"/>
        <end position="254"/>
    </location>
</feature>
<feature type="active site" evidence="1">
    <location>
        <position position="76"/>
    </location>
</feature>
<feature type="active site" evidence="1">
    <location>
        <position position="147"/>
    </location>
</feature>
<feature type="binding site" evidence="1">
    <location>
        <position position="72"/>
    </location>
    <ligand>
        <name>Mg(2+)</name>
        <dbReference type="ChEBI" id="CHEBI:18420"/>
    </ligand>
</feature>
<feature type="binding site" evidence="1">
    <location>
        <position position="144"/>
    </location>
    <ligand>
        <name>Mg(2+)</name>
        <dbReference type="ChEBI" id="CHEBI:18420"/>
    </ligand>
</feature>
<feature type="binding site" evidence="1">
    <location>
        <position position="147"/>
    </location>
    <ligand>
        <name>Mg(2+)</name>
        <dbReference type="ChEBI" id="CHEBI:18420"/>
    </ligand>
</feature>
<sequence length="266" mass="29313">MDASSSSNPDDGLQAIRLVDASDDEPYADAVAKIERCQEILGYDFRDLDLLRSALTHASGASHRLASNERLEFLGDSVLGLTVCEWLFNEYPEYSEGDLTKIKSAVVSRRSCGKVACKLGLDQCLIVGRGVTRNRSYPKSLVSDVFEAVIAALYIDGGPEIVRDRLKLWLAEEVNLAVDTQGSGNHKSVLQQFAQRELSATPVYKLIRETGPDHRKMFLMGAMVDDRRFAPAWGNNKKDAEQRAAANALAELHNAKVPYDSEQPPA</sequence>
<proteinExistence type="inferred from homology"/>
<gene>
    <name evidence="1" type="primary">rnc</name>
    <name type="ordered locus">RB4925</name>
</gene>
<accession>Q7UGZ7</accession>
<organism>
    <name type="scientific">Rhodopirellula baltica (strain DSM 10527 / NCIMB 13988 / SH1)</name>
    <dbReference type="NCBI Taxonomy" id="243090"/>
    <lineage>
        <taxon>Bacteria</taxon>
        <taxon>Pseudomonadati</taxon>
        <taxon>Planctomycetota</taxon>
        <taxon>Planctomycetia</taxon>
        <taxon>Pirellulales</taxon>
        <taxon>Pirellulaceae</taxon>
        <taxon>Rhodopirellula</taxon>
    </lineage>
</organism>
<name>RNC_RHOBA</name>
<reference key="1">
    <citation type="journal article" date="2003" name="Proc. Natl. Acad. Sci. U.S.A.">
        <title>Complete genome sequence of the marine planctomycete Pirellula sp. strain 1.</title>
        <authorList>
            <person name="Gloeckner F.O."/>
            <person name="Kube M."/>
            <person name="Bauer M."/>
            <person name="Teeling H."/>
            <person name="Lombardot T."/>
            <person name="Ludwig W."/>
            <person name="Gade D."/>
            <person name="Beck A."/>
            <person name="Borzym K."/>
            <person name="Heitmann K."/>
            <person name="Rabus R."/>
            <person name="Schlesner H."/>
            <person name="Amann R."/>
            <person name="Reinhardt R."/>
        </authorList>
    </citation>
    <scope>NUCLEOTIDE SEQUENCE [LARGE SCALE GENOMIC DNA]</scope>
    <source>
        <strain>DSM 10527 / NCIMB 13988 / SH1</strain>
    </source>
</reference>
<evidence type="ECO:0000255" key="1">
    <source>
        <dbReference type="HAMAP-Rule" id="MF_00104"/>
    </source>
</evidence>
<evidence type="ECO:0000305" key="2"/>
<comment type="function">
    <text evidence="1">Digests double-stranded RNA. Involved in the processing of primary rRNA transcript to yield the immediate precursors to the large and small rRNAs (23S and 16S). Processes some mRNAs, and tRNAs when they are encoded in the rRNA operon. Processes pre-crRNA and tracrRNA of type II CRISPR loci if present in the organism.</text>
</comment>
<comment type="catalytic activity">
    <reaction evidence="1">
        <text>Endonucleolytic cleavage to 5'-phosphomonoester.</text>
        <dbReference type="EC" id="3.1.26.3"/>
    </reaction>
</comment>
<comment type="cofactor">
    <cofactor evidence="1">
        <name>Mg(2+)</name>
        <dbReference type="ChEBI" id="CHEBI:18420"/>
    </cofactor>
</comment>
<comment type="subunit">
    <text evidence="1">Homodimer.</text>
</comment>
<comment type="subcellular location">
    <subcellularLocation>
        <location evidence="1">Cytoplasm</location>
    </subcellularLocation>
</comment>
<comment type="similarity">
    <text evidence="1">Belongs to the ribonuclease III family.</text>
</comment>
<comment type="sequence caution" evidence="2">
    <conflict type="erroneous initiation">
        <sequence resource="EMBL-CDS" id="CAD78182"/>
    </conflict>
    <text>Extended N-terminus.</text>
</comment>
<protein>
    <recommendedName>
        <fullName evidence="1">Ribonuclease 3</fullName>
        <ecNumber evidence="1">3.1.26.3</ecNumber>
    </recommendedName>
    <alternativeName>
        <fullName evidence="1">Ribonuclease III</fullName>
        <shortName evidence="1">RNase III</shortName>
    </alternativeName>
</protein>